<name>SYN_CLOBL</name>
<accession>A7GB01</accession>
<gene>
    <name evidence="1" type="primary">asnS</name>
    <name type="ordered locus">CLI_0677</name>
</gene>
<dbReference type="EC" id="6.1.1.22" evidence="1"/>
<dbReference type="EMBL" id="CP000728">
    <property type="protein sequence ID" value="ABS39705.1"/>
    <property type="molecule type" value="Genomic_DNA"/>
</dbReference>
<dbReference type="RefSeq" id="WP_011987559.1">
    <property type="nucleotide sequence ID" value="NC_009699.1"/>
</dbReference>
<dbReference type="SMR" id="A7GB01"/>
<dbReference type="KEGG" id="cbf:CLI_0677"/>
<dbReference type="HOGENOM" id="CLU_004553_2_0_9"/>
<dbReference type="Proteomes" id="UP000002410">
    <property type="component" value="Chromosome"/>
</dbReference>
<dbReference type="GO" id="GO:0005737">
    <property type="term" value="C:cytoplasm"/>
    <property type="evidence" value="ECO:0007669"/>
    <property type="project" value="UniProtKB-SubCell"/>
</dbReference>
<dbReference type="GO" id="GO:0004816">
    <property type="term" value="F:asparagine-tRNA ligase activity"/>
    <property type="evidence" value="ECO:0007669"/>
    <property type="project" value="UniProtKB-UniRule"/>
</dbReference>
<dbReference type="GO" id="GO:0005524">
    <property type="term" value="F:ATP binding"/>
    <property type="evidence" value="ECO:0007669"/>
    <property type="project" value="UniProtKB-UniRule"/>
</dbReference>
<dbReference type="GO" id="GO:0140096">
    <property type="term" value="F:catalytic activity, acting on a protein"/>
    <property type="evidence" value="ECO:0007669"/>
    <property type="project" value="UniProtKB-ARBA"/>
</dbReference>
<dbReference type="GO" id="GO:0003676">
    <property type="term" value="F:nucleic acid binding"/>
    <property type="evidence" value="ECO:0007669"/>
    <property type="project" value="InterPro"/>
</dbReference>
<dbReference type="GO" id="GO:0016740">
    <property type="term" value="F:transferase activity"/>
    <property type="evidence" value="ECO:0007669"/>
    <property type="project" value="UniProtKB-ARBA"/>
</dbReference>
<dbReference type="GO" id="GO:0006421">
    <property type="term" value="P:asparaginyl-tRNA aminoacylation"/>
    <property type="evidence" value="ECO:0007669"/>
    <property type="project" value="UniProtKB-UniRule"/>
</dbReference>
<dbReference type="CDD" id="cd00776">
    <property type="entry name" value="AsxRS_core"/>
    <property type="match status" value="1"/>
</dbReference>
<dbReference type="CDD" id="cd04318">
    <property type="entry name" value="EcAsnRS_like_N"/>
    <property type="match status" value="1"/>
</dbReference>
<dbReference type="FunFam" id="3.30.930.10:FF:000016">
    <property type="entry name" value="Asparagine--tRNA ligase"/>
    <property type="match status" value="1"/>
</dbReference>
<dbReference type="Gene3D" id="3.30.930.10">
    <property type="entry name" value="Bira Bifunctional Protein, Domain 2"/>
    <property type="match status" value="1"/>
</dbReference>
<dbReference type="Gene3D" id="2.40.50.140">
    <property type="entry name" value="Nucleic acid-binding proteins"/>
    <property type="match status" value="1"/>
</dbReference>
<dbReference type="HAMAP" id="MF_00534">
    <property type="entry name" value="Asn_tRNA_synth"/>
    <property type="match status" value="1"/>
</dbReference>
<dbReference type="InterPro" id="IPR004364">
    <property type="entry name" value="Aa-tRNA-synt_II"/>
</dbReference>
<dbReference type="InterPro" id="IPR006195">
    <property type="entry name" value="aa-tRNA-synth_II"/>
</dbReference>
<dbReference type="InterPro" id="IPR045864">
    <property type="entry name" value="aa-tRNA-synth_II/BPL/LPL"/>
</dbReference>
<dbReference type="InterPro" id="IPR004522">
    <property type="entry name" value="Asn-tRNA-ligase"/>
</dbReference>
<dbReference type="InterPro" id="IPR002312">
    <property type="entry name" value="Asp/Asn-tRNA-synth_IIb"/>
</dbReference>
<dbReference type="InterPro" id="IPR012340">
    <property type="entry name" value="NA-bd_OB-fold"/>
</dbReference>
<dbReference type="InterPro" id="IPR004365">
    <property type="entry name" value="NA-bd_OB_tRNA"/>
</dbReference>
<dbReference type="NCBIfam" id="TIGR00457">
    <property type="entry name" value="asnS"/>
    <property type="match status" value="1"/>
</dbReference>
<dbReference type="NCBIfam" id="NF003037">
    <property type="entry name" value="PRK03932.1"/>
    <property type="match status" value="1"/>
</dbReference>
<dbReference type="PANTHER" id="PTHR22594:SF34">
    <property type="entry name" value="ASPARAGINE--TRNA LIGASE, MITOCHONDRIAL-RELATED"/>
    <property type="match status" value="1"/>
</dbReference>
<dbReference type="PANTHER" id="PTHR22594">
    <property type="entry name" value="ASPARTYL/LYSYL-TRNA SYNTHETASE"/>
    <property type="match status" value="1"/>
</dbReference>
<dbReference type="Pfam" id="PF00152">
    <property type="entry name" value="tRNA-synt_2"/>
    <property type="match status" value="1"/>
</dbReference>
<dbReference type="Pfam" id="PF01336">
    <property type="entry name" value="tRNA_anti-codon"/>
    <property type="match status" value="1"/>
</dbReference>
<dbReference type="PRINTS" id="PR01042">
    <property type="entry name" value="TRNASYNTHASP"/>
</dbReference>
<dbReference type="SUPFAM" id="SSF55681">
    <property type="entry name" value="Class II aaRS and biotin synthetases"/>
    <property type="match status" value="1"/>
</dbReference>
<dbReference type="SUPFAM" id="SSF50249">
    <property type="entry name" value="Nucleic acid-binding proteins"/>
    <property type="match status" value="1"/>
</dbReference>
<dbReference type="PROSITE" id="PS50862">
    <property type="entry name" value="AA_TRNA_LIGASE_II"/>
    <property type="match status" value="1"/>
</dbReference>
<protein>
    <recommendedName>
        <fullName evidence="1">Asparagine--tRNA ligase</fullName>
        <ecNumber evidence="1">6.1.1.22</ecNumber>
    </recommendedName>
    <alternativeName>
        <fullName evidence="1">Asparaginyl-tRNA synthetase</fullName>
        <shortName evidence="1">AsnRS</shortName>
    </alternativeName>
</protein>
<sequence>MDITLVKSLYREAEKYMDKEVKINGWVRTVRDSKNFAFVEVNDGSFFKNVQVILESSLENFKELCKMPISTSVEVEGIIQPTPNAKQPFEIKATRVSIEGKSSTDYPLQKKRHTFEYLRTIAHLRPRSNAFSAVFRVRSLAAYAVHKFFQERGFVYTNTPIITGSDCEGAGEMFQLTTMDLNNIPKTEEGKIDFSKDFFGSPANLTVSGQLSAETFALAFRNVYTFGPTFRAENSNTARHASEFWMIEPEMAFAELTDYLDNAENMVKFVINYVMENAPEEMAFFNSFVDKGLFDRLDNVVNSDFKRITYTEAVELLQKSGGKFDYEVEWGIDLQTEHERYLTEQIFKKPVFVTDYPKDIKAFYMRLNDDGKTVAAADLLVPGVGEIIGGSQREERLDVLEKRMEELNLNKEDYWWYLELRKYGETKHSGYGLGFERILMYITGMTNIRDVIPFPRTPGSAEF</sequence>
<feature type="chain" id="PRO_1000051385" description="Asparagine--tRNA ligase">
    <location>
        <begin position="1"/>
        <end position="463"/>
    </location>
</feature>
<reference key="1">
    <citation type="submission" date="2007-06" db="EMBL/GenBank/DDBJ databases">
        <authorList>
            <person name="Brinkac L.M."/>
            <person name="Daugherty S."/>
            <person name="Dodson R.J."/>
            <person name="Madupu R."/>
            <person name="Brown J.L."/>
            <person name="Bruce D."/>
            <person name="Detter C."/>
            <person name="Munk C."/>
            <person name="Smith L.A."/>
            <person name="Smith T.J."/>
            <person name="White O."/>
            <person name="Brettin T.S."/>
        </authorList>
    </citation>
    <scope>NUCLEOTIDE SEQUENCE [LARGE SCALE GENOMIC DNA]</scope>
    <source>
        <strain>Langeland / NCTC 10281 / Type F</strain>
    </source>
</reference>
<comment type="catalytic activity">
    <reaction evidence="1">
        <text>tRNA(Asn) + L-asparagine + ATP = L-asparaginyl-tRNA(Asn) + AMP + diphosphate + H(+)</text>
        <dbReference type="Rhea" id="RHEA:11180"/>
        <dbReference type="Rhea" id="RHEA-COMP:9659"/>
        <dbReference type="Rhea" id="RHEA-COMP:9674"/>
        <dbReference type="ChEBI" id="CHEBI:15378"/>
        <dbReference type="ChEBI" id="CHEBI:30616"/>
        <dbReference type="ChEBI" id="CHEBI:33019"/>
        <dbReference type="ChEBI" id="CHEBI:58048"/>
        <dbReference type="ChEBI" id="CHEBI:78442"/>
        <dbReference type="ChEBI" id="CHEBI:78515"/>
        <dbReference type="ChEBI" id="CHEBI:456215"/>
        <dbReference type="EC" id="6.1.1.22"/>
    </reaction>
</comment>
<comment type="subunit">
    <text evidence="1">Homodimer.</text>
</comment>
<comment type="subcellular location">
    <subcellularLocation>
        <location evidence="1">Cytoplasm</location>
    </subcellularLocation>
</comment>
<comment type="similarity">
    <text evidence="1">Belongs to the class-II aminoacyl-tRNA synthetase family.</text>
</comment>
<organism>
    <name type="scientific">Clostridium botulinum (strain Langeland / NCTC 10281 / Type F)</name>
    <dbReference type="NCBI Taxonomy" id="441772"/>
    <lineage>
        <taxon>Bacteria</taxon>
        <taxon>Bacillati</taxon>
        <taxon>Bacillota</taxon>
        <taxon>Clostridia</taxon>
        <taxon>Eubacteriales</taxon>
        <taxon>Clostridiaceae</taxon>
        <taxon>Clostridium</taxon>
    </lineage>
</organism>
<proteinExistence type="inferred from homology"/>
<evidence type="ECO:0000255" key="1">
    <source>
        <dbReference type="HAMAP-Rule" id="MF_00534"/>
    </source>
</evidence>
<keyword id="KW-0030">Aminoacyl-tRNA synthetase</keyword>
<keyword id="KW-0067">ATP-binding</keyword>
<keyword id="KW-0963">Cytoplasm</keyword>
<keyword id="KW-0436">Ligase</keyword>
<keyword id="KW-0547">Nucleotide-binding</keyword>
<keyword id="KW-0648">Protein biosynthesis</keyword>